<dbReference type="EC" id="3.6.4.-" evidence="1"/>
<dbReference type="EMBL" id="CP000746">
    <property type="protein sequence ID" value="ABR75339.1"/>
    <property type="molecule type" value="Genomic_DNA"/>
</dbReference>
<dbReference type="RefSeq" id="WP_012073716.1">
    <property type="nucleotide sequence ID" value="NC_009655.1"/>
</dbReference>
<dbReference type="SMR" id="A6VQU2"/>
<dbReference type="STRING" id="339671.Asuc_1992"/>
<dbReference type="KEGG" id="asu:Asuc_1992"/>
<dbReference type="eggNOG" id="COG0553">
    <property type="taxonomic scope" value="Bacteria"/>
</dbReference>
<dbReference type="HOGENOM" id="CLU_011520_0_0_6"/>
<dbReference type="OrthoDB" id="9814088at2"/>
<dbReference type="Proteomes" id="UP000001114">
    <property type="component" value="Chromosome"/>
</dbReference>
<dbReference type="GO" id="GO:0005524">
    <property type="term" value="F:ATP binding"/>
    <property type="evidence" value="ECO:0007669"/>
    <property type="project" value="UniProtKB-UniRule"/>
</dbReference>
<dbReference type="GO" id="GO:0003677">
    <property type="term" value="F:DNA binding"/>
    <property type="evidence" value="ECO:0007669"/>
    <property type="project" value="UniProtKB-KW"/>
</dbReference>
<dbReference type="GO" id="GO:0004386">
    <property type="term" value="F:helicase activity"/>
    <property type="evidence" value="ECO:0007669"/>
    <property type="project" value="UniProtKB-UniRule"/>
</dbReference>
<dbReference type="GO" id="GO:0016817">
    <property type="term" value="F:hydrolase activity, acting on acid anhydrides"/>
    <property type="evidence" value="ECO:0007669"/>
    <property type="project" value="InterPro"/>
</dbReference>
<dbReference type="GO" id="GO:0006355">
    <property type="term" value="P:regulation of DNA-templated transcription"/>
    <property type="evidence" value="ECO:0007669"/>
    <property type="project" value="UniProtKB-UniRule"/>
</dbReference>
<dbReference type="CDD" id="cd18011">
    <property type="entry name" value="DEXDc_RapA"/>
    <property type="match status" value="1"/>
</dbReference>
<dbReference type="CDD" id="cd18793">
    <property type="entry name" value="SF2_C_SNF"/>
    <property type="match status" value="1"/>
</dbReference>
<dbReference type="Gene3D" id="2.30.30.140">
    <property type="match status" value="1"/>
</dbReference>
<dbReference type="Gene3D" id="2.30.30.930">
    <property type="match status" value="1"/>
</dbReference>
<dbReference type="Gene3D" id="3.30.360.80">
    <property type="match status" value="1"/>
</dbReference>
<dbReference type="Gene3D" id="6.10.140.1500">
    <property type="match status" value="1"/>
</dbReference>
<dbReference type="Gene3D" id="6.10.140.2230">
    <property type="match status" value="1"/>
</dbReference>
<dbReference type="Gene3D" id="3.40.50.300">
    <property type="entry name" value="P-loop containing nucleotide triphosphate hydrolases"/>
    <property type="match status" value="1"/>
</dbReference>
<dbReference type="Gene3D" id="3.40.50.10810">
    <property type="entry name" value="Tandem AAA-ATPase domain"/>
    <property type="match status" value="1"/>
</dbReference>
<dbReference type="HAMAP" id="MF_01821">
    <property type="entry name" value="Helicase_RapA"/>
    <property type="match status" value="1"/>
</dbReference>
<dbReference type="InterPro" id="IPR014001">
    <property type="entry name" value="Helicase_ATP-bd"/>
</dbReference>
<dbReference type="InterPro" id="IPR001650">
    <property type="entry name" value="Helicase_C-like"/>
</dbReference>
<dbReference type="InterPro" id="IPR023949">
    <property type="entry name" value="Helicase_RapA"/>
</dbReference>
<dbReference type="InterPro" id="IPR027417">
    <property type="entry name" value="P-loop_NTPase"/>
</dbReference>
<dbReference type="InterPro" id="IPR022737">
    <property type="entry name" value="RapA_C"/>
</dbReference>
<dbReference type="InterPro" id="IPR038718">
    <property type="entry name" value="SNF2-like_sf"/>
</dbReference>
<dbReference type="InterPro" id="IPR049730">
    <property type="entry name" value="SNF2/RAD54-like_C"/>
</dbReference>
<dbReference type="InterPro" id="IPR000330">
    <property type="entry name" value="SNF2_N"/>
</dbReference>
<dbReference type="InterPro" id="IPR040765">
    <property type="entry name" value="Tudor_1_RapA"/>
</dbReference>
<dbReference type="InterPro" id="IPR040766">
    <property type="entry name" value="Tudor_2_RapA"/>
</dbReference>
<dbReference type="NCBIfam" id="NF003426">
    <property type="entry name" value="PRK04914.1"/>
    <property type="match status" value="1"/>
</dbReference>
<dbReference type="PANTHER" id="PTHR45766">
    <property type="entry name" value="DNA ANNEALING HELICASE AND ENDONUCLEASE ZRANB3 FAMILY MEMBER"/>
    <property type="match status" value="1"/>
</dbReference>
<dbReference type="PANTHER" id="PTHR45766:SF6">
    <property type="entry name" value="SWI_SNF-RELATED MATRIX-ASSOCIATED ACTIN-DEPENDENT REGULATOR OF CHROMATIN SUBFAMILY A-LIKE PROTEIN 1"/>
    <property type="match status" value="1"/>
</dbReference>
<dbReference type="Pfam" id="PF00271">
    <property type="entry name" value="Helicase_C"/>
    <property type="match status" value="1"/>
</dbReference>
<dbReference type="Pfam" id="PF12137">
    <property type="entry name" value="RapA_C"/>
    <property type="match status" value="1"/>
</dbReference>
<dbReference type="Pfam" id="PF00176">
    <property type="entry name" value="SNF2-rel_dom"/>
    <property type="match status" value="1"/>
</dbReference>
<dbReference type="Pfam" id="PF18339">
    <property type="entry name" value="Tudor_1_RapA"/>
    <property type="match status" value="1"/>
</dbReference>
<dbReference type="Pfam" id="PF18337">
    <property type="entry name" value="Tudor_RapA"/>
    <property type="match status" value="1"/>
</dbReference>
<dbReference type="SMART" id="SM00487">
    <property type="entry name" value="DEXDc"/>
    <property type="match status" value="1"/>
</dbReference>
<dbReference type="SMART" id="SM00490">
    <property type="entry name" value="HELICc"/>
    <property type="match status" value="1"/>
</dbReference>
<dbReference type="SUPFAM" id="SSF52540">
    <property type="entry name" value="P-loop containing nucleoside triphosphate hydrolases"/>
    <property type="match status" value="2"/>
</dbReference>
<dbReference type="PROSITE" id="PS51192">
    <property type="entry name" value="HELICASE_ATP_BIND_1"/>
    <property type="match status" value="1"/>
</dbReference>
<dbReference type="PROSITE" id="PS51194">
    <property type="entry name" value="HELICASE_CTER"/>
    <property type="match status" value="1"/>
</dbReference>
<keyword id="KW-0010">Activator</keyword>
<keyword id="KW-0067">ATP-binding</keyword>
<keyword id="KW-0238">DNA-binding</keyword>
<keyword id="KW-0347">Helicase</keyword>
<keyword id="KW-0378">Hydrolase</keyword>
<keyword id="KW-0547">Nucleotide-binding</keyword>
<keyword id="KW-1185">Reference proteome</keyword>
<keyword id="KW-0804">Transcription</keyword>
<keyword id="KW-0805">Transcription regulation</keyword>
<accession>A6VQU2</accession>
<name>RAPA_ACTSZ</name>
<proteinExistence type="inferred from homology"/>
<protein>
    <recommendedName>
        <fullName evidence="1">RNA polymerase-associated protein RapA</fullName>
        <ecNumber evidence="1">3.6.4.-</ecNumber>
    </recommendedName>
    <alternativeName>
        <fullName evidence="1">ATP-dependent helicase HepA</fullName>
    </alternativeName>
</protein>
<comment type="function">
    <text evidence="1">Transcription regulator that activates transcription by stimulating RNA polymerase (RNAP) recycling in case of stress conditions such as supercoiled DNA or high salt concentrations. Probably acts by releasing the RNAP, when it is trapped or immobilized on tightly supercoiled DNA. Does not activate transcription on linear DNA. Probably not involved in DNA repair.</text>
</comment>
<comment type="subunit">
    <text evidence="1">Interacts with the RNAP. Has a higher affinity for the core RNAP than for the holoenzyme. Its ATPase activity is stimulated by binding to RNAP.</text>
</comment>
<comment type="similarity">
    <text evidence="1">Belongs to the SNF2/RAD54 helicase family. RapA subfamily.</text>
</comment>
<evidence type="ECO:0000255" key="1">
    <source>
        <dbReference type="HAMAP-Rule" id="MF_01821"/>
    </source>
</evidence>
<organism>
    <name type="scientific">Actinobacillus succinogenes (strain ATCC 55618 / DSM 22257 / CCUG 43843 / 130Z)</name>
    <dbReference type="NCBI Taxonomy" id="339671"/>
    <lineage>
        <taxon>Bacteria</taxon>
        <taxon>Pseudomonadati</taxon>
        <taxon>Pseudomonadota</taxon>
        <taxon>Gammaproteobacteria</taxon>
        <taxon>Pasteurellales</taxon>
        <taxon>Pasteurellaceae</taxon>
        <taxon>Actinobacillus</taxon>
    </lineage>
</organism>
<gene>
    <name evidence="1" type="primary">rapA</name>
    <name type="ordered locus">Asuc_1992</name>
</gene>
<reference key="1">
    <citation type="journal article" date="2010" name="BMC Genomics">
        <title>A genomic perspective on the potential of Actinobacillus succinogenes for industrial succinate production.</title>
        <authorList>
            <person name="McKinlay J.B."/>
            <person name="Laivenieks M."/>
            <person name="Schindler B.D."/>
            <person name="McKinlay A.A."/>
            <person name="Siddaramappa S."/>
            <person name="Challacombe J.F."/>
            <person name="Lowry S.R."/>
            <person name="Clum A."/>
            <person name="Lapidus A.L."/>
            <person name="Burkhart K.B."/>
            <person name="Harkins V."/>
            <person name="Vieille C."/>
        </authorList>
    </citation>
    <scope>NUCLEOTIDE SEQUENCE [LARGE SCALE GENOMIC DNA]</scope>
    <source>
        <strain>ATCC 55618 / DSM 22257 / CCUG 43843 / 130Z</strain>
    </source>
</reference>
<sequence length="966" mass="110092">MVFAVGQRWISESENNLGLGIITEVNSRAVTIFFPAADETRIYATASAPLTRVVFNAGDMITHQQGWQAQVTDIMVNNLTALYLVRRTDNGEEIVLKEIDLAHQINFSQPQDRLFTAQIDRSDRFALRYHALRHQQAQFKSPLRGLRGIRAGLIPHQLHIAKEVGQRLHPRVLLADEVGLGKTIEAGMILQQQIFAGRADRVLIVVPESLQHQWLVEMLRRFNLHFSLFDEERAEDFAATDEQEECNPFDSENLIICSLDWLISRPKRRTQALQTQFDLLIVDEAHHLTWSPEAANPEYQLVESLTKQIPSVLLLTATPEQLGQESHFARLKLLDADRFYDYDAFVAEQRHYRPVADAVQTLLAENPLSAAEKNAISDLLEEQDLEPLFKALDSRNEEEKATVRQELIDSLIDRHGTSRVLFRNTRQGVKGFPRRIYRQINLPLPKQYINAVRVVGRLGKNPEDELFYPERLFQNMDQNAKWWDFDPRVEWLITFLKNHRAEKVLVICRQAQTAVQLEQALRAKEGIRCAVFHERLSIIERDRAAAYFADQENGAQVLLSSAIGSEGRNFQFACRLVLFNLPENPDLLEQCIGRLDRIGQRRDIRIYVPCFADSPQAVLADWFHQGLNAFEEICPMGMALFEKCGQNLQYFLQNPTESAGFEMFLKKTAELRLQLKAELENGRDRLLELNSNGGEAAQRLAEAIRVEDNDTELVNFTLNLFDIIGVEQEDSGEKSIVITPTGTMLVPDFPGLKEEGVTVTFDRELALAREELEFLTWDHPMLRNGIDLVVSGDIGKTAASLLVNNKLPTGTLLLELIYVVESQSPKGLQLNRFLPPTPIRLLLDGKGQDLAAQVGFNRLEKQLKPMAKNMASKMVKMVRPNIEKMLSMAEQLMRERAKTLIGDAQQQADFVLSHELNRLNGLKRVNKNIRQDEIDGLEKIRIRSLSELAKASWRLDCLRVIVSNRA</sequence>
<feature type="chain" id="PRO_1000088347" description="RNA polymerase-associated protein RapA">
    <location>
        <begin position="1"/>
        <end position="966"/>
    </location>
</feature>
<feature type="domain" description="Helicase ATP-binding" evidence="1">
    <location>
        <begin position="163"/>
        <end position="337"/>
    </location>
</feature>
<feature type="domain" description="Helicase C-terminal" evidence="1">
    <location>
        <begin position="488"/>
        <end position="642"/>
    </location>
</feature>
<feature type="short sequence motif" description="DEAH box">
    <location>
        <begin position="283"/>
        <end position="286"/>
    </location>
</feature>
<feature type="binding site" evidence="1">
    <location>
        <begin position="176"/>
        <end position="183"/>
    </location>
    <ligand>
        <name>ATP</name>
        <dbReference type="ChEBI" id="CHEBI:30616"/>
    </ligand>
</feature>